<gene>
    <name type="ordered locus">RPA0299</name>
</gene>
<keyword id="KW-0963">Cytoplasm</keyword>
<keyword id="KW-0378">Hydrolase</keyword>
<keyword id="KW-0546">Nucleotide metabolism</keyword>
<reference key="1">
    <citation type="journal article" date="2004" name="Nat. Biotechnol.">
        <title>Complete genome sequence of the metabolically versatile photosynthetic bacterium Rhodopseudomonas palustris.</title>
        <authorList>
            <person name="Larimer F.W."/>
            <person name="Chain P."/>
            <person name="Hauser L."/>
            <person name="Lamerdin J.E."/>
            <person name="Malfatti S."/>
            <person name="Do L."/>
            <person name="Land M.L."/>
            <person name="Pelletier D.A."/>
            <person name="Beatty J.T."/>
            <person name="Lang A.S."/>
            <person name="Tabita F.R."/>
            <person name="Gibson J.L."/>
            <person name="Hanson T.E."/>
            <person name="Bobst C."/>
            <person name="Torres y Torres J.L."/>
            <person name="Peres C."/>
            <person name="Harrison F.H."/>
            <person name="Gibson J."/>
            <person name="Harwood C.S."/>
        </authorList>
    </citation>
    <scope>NUCLEOTIDE SEQUENCE [LARGE SCALE GENOMIC DNA]</scope>
    <source>
        <strain>ATCC BAA-98 / CGA009</strain>
    </source>
</reference>
<evidence type="ECO:0000255" key="1">
    <source>
        <dbReference type="HAMAP-Rule" id="MF_00528"/>
    </source>
</evidence>
<dbReference type="EC" id="3.6.1.9" evidence="1"/>
<dbReference type="EMBL" id="BX572593">
    <property type="protein sequence ID" value="CAE25743.1"/>
    <property type="molecule type" value="Genomic_DNA"/>
</dbReference>
<dbReference type="RefSeq" id="WP_011155867.1">
    <property type="nucleotide sequence ID" value="NZ_CP116810.1"/>
</dbReference>
<dbReference type="SMR" id="Q6ND10"/>
<dbReference type="STRING" id="258594.RPA0299"/>
<dbReference type="GeneID" id="66891309"/>
<dbReference type="eggNOG" id="COG0424">
    <property type="taxonomic scope" value="Bacteria"/>
</dbReference>
<dbReference type="HOGENOM" id="CLU_040416_1_1_5"/>
<dbReference type="PhylomeDB" id="Q6ND10"/>
<dbReference type="GO" id="GO:0005737">
    <property type="term" value="C:cytoplasm"/>
    <property type="evidence" value="ECO:0007669"/>
    <property type="project" value="UniProtKB-SubCell"/>
</dbReference>
<dbReference type="GO" id="GO:0047429">
    <property type="term" value="F:nucleoside triphosphate diphosphatase activity"/>
    <property type="evidence" value="ECO:0007669"/>
    <property type="project" value="UniProtKB-EC"/>
</dbReference>
<dbReference type="GO" id="GO:0009117">
    <property type="term" value="P:nucleotide metabolic process"/>
    <property type="evidence" value="ECO:0007669"/>
    <property type="project" value="UniProtKB-KW"/>
</dbReference>
<dbReference type="CDD" id="cd00555">
    <property type="entry name" value="Maf"/>
    <property type="match status" value="1"/>
</dbReference>
<dbReference type="Gene3D" id="3.90.950.10">
    <property type="match status" value="1"/>
</dbReference>
<dbReference type="HAMAP" id="MF_00528">
    <property type="entry name" value="Maf"/>
    <property type="match status" value="1"/>
</dbReference>
<dbReference type="InterPro" id="IPR029001">
    <property type="entry name" value="ITPase-like_fam"/>
</dbReference>
<dbReference type="InterPro" id="IPR003697">
    <property type="entry name" value="Maf-like"/>
</dbReference>
<dbReference type="PANTHER" id="PTHR43213">
    <property type="entry name" value="BIFUNCTIONAL DTTP/UTP PYROPHOSPHATASE/METHYLTRANSFERASE PROTEIN-RELATED"/>
    <property type="match status" value="1"/>
</dbReference>
<dbReference type="PANTHER" id="PTHR43213:SF5">
    <property type="entry name" value="BIFUNCTIONAL DTTP_UTP PYROPHOSPHATASE_METHYLTRANSFERASE PROTEIN-RELATED"/>
    <property type="match status" value="1"/>
</dbReference>
<dbReference type="Pfam" id="PF02545">
    <property type="entry name" value="Maf"/>
    <property type="match status" value="1"/>
</dbReference>
<dbReference type="PIRSF" id="PIRSF006305">
    <property type="entry name" value="Maf"/>
    <property type="match status" value="1"/>
</dbReference>
<dbReference type="SUPFAM" id="SSF52972">
    <property type="entry name" value="ITPase-like"/>
    <property type="match status" value="1"/>
</dbReference>
<accession>Q6ND10</accession>
<organism>
    <name type="scientific">Rhodopseudomonas palustris (strain ATCC BAA-98 / CGA009)</name>
    <dbReference type="NCBI Taxonomy" id="258594"/>
    <lineage>
        <taxon>Bacteria</taxon>
        <taxon>Pseudomonadati</taxon>
        <taxon>Pseudomonadota</taxon>
        <taxon>Alphaproteobacteria</taxon>
        <taxon>Hyphomicrobiales</taxon>
        <taxon>Nitrobacteraceae</taxon>
        <taxon>Rhodopseudomonas</taxon>
    </lineage>
</organism>
<comment type="function">
    <text evidence="1">Nucleoside triphosphate pyrophosphatase. May have a dual role in cell division arrest and in preventing the incorporation of modified nucleotides into cellular nucleic acids.</text>
</comment>
<comment type="catalytic activity">
    <reaction evidence="1">
        <text>a ribonucleoside 5'-triphosphate + H2O = a ribonucleoside 5'-phosphate + diphosphate + H(+)</text>
        <dbReference type="Rhea" id="RHEA:23996"/>
        <dbReference type="ChEBI" id="CHEBI:15377"/>
        <dbReference type="ChEBI" id="CHEBI:15378"/>
        <dbReference type="ChEBI" id="CHEBI:33019"/>
        <dbReference type="ChEBI" id="CHEBI:58043"/>
        <dbReference type="ChEBI" id="CHEBI:61557"/>
        <dbReference type="EC" id="3.6.1.9"/>
    </reaction>
</comment>
<comment type="catalytic activity">
    <reaction evidence="1">
        <text>a 2'-deoxyribonucleoside 5'-triphosphate + H2O = a 2'-deoxyribonucleoside 5'-phosphate + diphosphate + H(+)</text>
        <dbReference type="Rhea" id="RHEA:44644"/>
        <dbReference type="ChEBI" id="CHEBI:15377"/>
        <dbReference type="ChEBI" id="CHEBI:15378"/>
        <dbReference type="ChEBI" id="CHEBI:33019"/>
        <dbReference type="ChEBI" id="CHEBI:61560"/>
        <dbReference type="ChEBI" id="CHEBI:65317"/>
        <dbReference type="EC" id="3.6.1.9"/>
    </reaction>
</comment>
<comment type="cofactor">
    <cofactor evidence="1">
        <name>a divalent metal cation</name>
        <dbReference type="ChEBI" id="CHEBI:60240"/>
    </cofactor>
</comment>
<comment type="subcellular location">
    <subcellularLocation>
        <location evidence="1">Cytoplasm</location>
    </subcellularLocation>
</comment>
<comment type="similarity">
    <text evidence="1">Belongs to the Maf family.</text>
</comment>
<sequence>MTLWLGPQPLVLASQSRARQTVLANAGIPFDAIPADIDERGIAEASGLSAPGDIAALLAQQKAAFVSNYHPGRLVLGADQTLALGARGFNKPADRAAAAKQLRELAGRRHELHSAVAVVRNGITLFADVAIARMTMRPLTEAEIEAYLDVVGDKATTSVGAYQIEGLGVHLFDGIHGDHFTILGLPLLPLLGFLRSQNLLAV</sequence>
<feature type="chain" id="PRO_0000267400" description="Nucleoside triphosphate pyrophosphatase">
    <location>
        <begin position="1"/>
        <end position="202"/>
    </location>
</feature>
<feature type="active site" description="Proton acceptor" evidence="1">
    <location>
        <position position="79"/>
    </location>
</feature>
<proteinExistence type="inferred from homology"/>
<protein>
    <recommendedName>
        <fullName evidence="1">Nucleoside triphosphate pyrophosphatase</fullName>
        <ecNumber evidence="1">3.6.1.9</ecNumber>
    </recommendedName>
    <alternativeName>
        <fullName evidence="1">Nucleotide pyrophosphatase</fullName>
        <shortName evidence="1">Nucleotide PPase</shortName>
    </alternativeName>
</protein>
<name>NTPP_RHOPA</name>